<reference key="1">
    <citation type="journal article" date="2009" name="Appl. Environ. Microbiol.">
        <title>Novel features of the polysaccharide-digesting gliding bacterium Flavobacterium johnsoniae as revealed by genome sequence analysis.</title>
        <authorList>
            <person name="McBride M.J."/>
            <person name="Xie G."/>
            <person name="Martens E.C."/>
            <person name="Lapidus A."/>
            <person name="Henrissat B."/>
            <person name="Rhodes R.G."/>
            <person name="Goltsman E."/>
            <person name="Wang W."/>
            <person name="Xu J."/>
            <person name="Hunnicutt D.W."/>
            <person name="Staroscik A.M."/>
            <person name="Hoover T.R."/>
            <person name="Cheng Y.Q."/>
            <person name="Stein J.L."/>
        </authorList>
    </citation>
    <scope>NUCLEOTIDE SEQUENCE [LARGE SCALE GENOMIC DNA]</scope>
    <source>
        <strain>ATCC 17061 / DSM 2064 / JCM 8514 / BCRC 14874 / CCUG 350202 / NBRC 14942 / NCIMB 11054 / UW101</strain>
    </source>
</reference>
<dbReference type="EC" id="2.1.1.14" evidence="1"/>
<dbReference type="EMBL" id="CP000685">
    <property type="protein sequence ID" value="ABQ04551.1"/>
    <property type="molecule type" value="Genomic_DNA"/>
</dbReference>
<dbReference type="RefSeq" id="WP_012023597.1">
    <property type="nucleotide sequence ID" value="NC_009441.1"/>
</dbReference>
<dbReference type="SMR" id="A5FJR8"/>
<dbReference type="STRING" id="376686.Fjoh_1519"/>
<dbReference type="KEGG" id="fjo:Fjoh_1519"/>
<dbReference type="eggNOG" id="COG0620">
    <property type="taxonomic scope" value="Bacteria"/>
</dbReference>
<dbReference type="HOGENOM" id="CLU_013175_0_0_10"/>
<dbReference type="OrthoDB" id="244285at2"/>
<dbReference type="UniPathway" id="UPA00051">
    <property type="reaction ID" value="UER00082"/>
</dbReference>
<dbReference type="Proteomes" id="UP000006694">
    <property type="component" value="Chromosome"/>
</dbReference>
<dbReference type="GO" id="GO:0003871">
    <property type="term" value="F:5-methyltetrahydropteroyltriglutamate-homocysteine S-methyltransferase activity"/>
    <property type="evidence" value="ECO:0007669"/>
    <property type="project" value="UniProtKB-UniRule"/>
</dbReference>
<dbReference type="GO" id="GO:0008270">
    <property type="term" value="F:zinc ion binding"/>
    <property type="evidence" value="ECO:0007669"/>
    <property type="project" value="InterPro"/>
</dbReference>
<dbReference type="GO" id="GO:0009086">
    <property type="term" value="P:methionine biosynthetic process"/>
    <property type="evidence" value="ECO:0007669"/>
    <property type="project" value="UniProtKB-UniRule"/>
</dbReference>
<dbReference type="GO" id="GO:0032259">
    <property type="term" value="P:methylation"/>
    <property type="evidence" value="ECO:0007669"/>
    <property type="project" value="UniProtKB-KW"/>
</dbReference>
<dbReference type="CDD" id="cd03311">
    <property type="entry name" value="CIMS_C_terminal_like"/>
    <property type="match status" value="1"/>
</dbReference>
<dbReference type="CDD" id="cd03312">
    <property type="entry name" value="CIMS_N_terminal_like"/>
    <property type="match status" value="1"/>
</dbReference>
<dbReference type="FunFam" id="3.20.20.210:FF:000002">
    <property type="entry name" value="5-methyltetrahydropteroyltriglutamate--homocysteine methyltransferase"/>
    <property type="match status" value="1"/>
</dbReference>
<dbReference type="FunFam" id="3.20.20.210:FF:000003">
    <property type="entry name" value="5-methyltetrahydropteroyltriglutamate--homocysteine methyltransferase"/>
    <property type="match status" value="1"/>
</dbReference>
<dbReference type="Gene3D" id="3.20.20.210">
    <property type="match status" value="2"/>
</dbReference>
<dbReference type="HAMAP" id="MF_00172">
    <property type="entry name" value="Meth_synth"/>
    <property type="match status" value="1"/>
</dbReference>
<dbReference type="InterPro" id="IPR013215">
    <property type="entry name" value="Cbl-indep_Met_Synth_N"/>
</dbReference>
<dbReference type="InterPro" id="IPR006276">
    <property type="entry name" value="Cobalamin-indep_Met_synthase"/>
</dbReference>
<dbReference type="InterPro" id="IPR002629">
    <property type="entry name" value="Met_Synth_C/arc"/>
</dbReference>
<dbReference type="InterPro" id="IPR038071">
    <property type="entry name" value="UROD/MetE-like_sf"/>
</dbReference>
<dbReference type="NCBIfam" id="TIGR01371">
    <property type="entry name" value="met_syn_B12ind"/>
    <property type="match status" value="1"/>
</dbReference>
<dbReference type="NCBIfam" id="NF003556">
    <property type="entry name" value="PRK05222.1"/>
    <property type="match status" value="1"/>
</dbReference>
<dbReference type="PANTHER" id="PTHR30519">
    <property type="entry name" value="5-METHYLTETRAHYDROPTEROYLTRIGLUTAMATE--HOMOCYSTEINE METHYLTRANSFERASE"/>
    <property type="match status" value="1"/>
</dbReference>
<dbReference type="Pfam" id="PF08267">
    <property type="entry name" value="Meth_synt_1"/>
    <property type="match status" value="1"/>
</dbReference>
<dbReference type="Pfam" id="PF01717">
    <property type="entry name" value="Meth_synt_2"/>
    <property type="match status" value="1"/>
</dbReference>
<dbReference type="PIRSF" id="PIRSF000382">
    <property type="entry name" value="MeTrfase_B12_ind"/>
    <property type="match status" value="1"/>
</dbReference>
<dbReference type="SUPFAM" id="SSF51726">
    <property type="entry name" value="UROD/MetE-like"/>
    <property type="match status" value="2"/>
</dbReference>
<comment type="function">
    <text evidence="1">Catalyzes the transfer of a methyl group from 5-methyltetrahydrofolate to homocysteine resulting in methionine formation.</text>
</comment>
<comment type="catalytic activity">
    <reaction evidence="1">
        <text>5-methyltetrahydropteroyltri-L-glutamate + L-homocysteine = tetrahydropteroyltri-L-glutamate + L-methionine</text>
        <dbReference type="Rhea" id="RHEA:21196"/>
        <dbReference type="ChEBI" id="CHEBI:57844"/>
        <dbReference type="ChEBI" id="CHEBI:58140"/>
        <dbReference type="ChEBI" id="CHEBI:58199"/>
        <dbReference type="ChEBI" id="CHEBI:58207"/>
        <dbReference type="EC" id="2.1.1.14"/>
    </reaction>
</comment>
<comment type="cofactor">
    <cofactor evidence="1">
        <name>Zn(2+)</name>
        <dbReference type="ChEBI" id="CHEBI:29105"/>
    </cofactor>
    <text evidence="1">Binds 1 zinc ion per subunit.</text>
</comment>
<comment type="pathway">
    <text evidence="1">Amino-acid biosynthesis; L-methionine biosynthesis via de novo pathway; L-methionine from L-homocysteine (MetE route): step 1/1.</text>
</comment>
<comment type="similarity">
    <text evidence="1">Belongs to the vitamin-B12 independent methionine synthase family.</text>
</comment>
<gene>
    <name evidence="1" type="primary">metE</name>
    <name type="ordered locus">Fjoh_1519</name>
</gene>
<evidence type="ECO:0000255" key="1">
    <source>
        <dbReference type="HAMAP-Rule" id="MF_00172"/>
    </source>
</evidence>
<feature type="chain" id="PRO_1000097829" description="5-methyltetrahydropteroyltriglutamate--homocysteine methyltransferase">
    <location>
        <begin position="1"/>
        <end position="774"/>
    </location>
</feature>
<feature type="active site" description="Proton donor" evidence="1">
    <location>
        <position position="708"/>
    </location>
</feature>
<feature type="binding site" evidence="1">
    <location>
        <begin position="15"/>
        <end position="18"/>
    </location>
    <ligand>
        <name>5-methyltetrahydropteroyltri-L-glutamate</name>
        <dbReference type="ChEBI" id="CHEBI:58207"/>
    </ligand>
</feature>
<feature type="binding site" evidence="1">
    <location>
        <position position="116"/>
    </location>
    <ligand>
        <name>5-methyltetrahydropteroyltri-L-glutamate</name>
        <dbReference type="ChEBI" id="CHEBI:58207"/>
    </ligand>
</feature>
<feature type="binding site" evidence="1">
    <location>
        <begin position="445"/>
        <end position="447"/>
    </location>
    <ligand>
        <name>L-homocysteine</name>
        <dbReference type="ChEBI" id="CHEBI:58199"/>
    </ligand>
</feature>
<feature type="binding site" evidence="1">
    <location>
        <begin position="445"/>
        <end position="447"/>
    </location>
    <ligand>
        <name>L-methionine</name>
        <dbReference type="ChEBI" id="CHEBI:57844"/>
    </ligand>
</feature>
<feature type="binding site" evidence="1">
    <location>
        <position position="498"/>
    </location>
    <ligand>
        <name>L-homocysteine</name>
        <dbReference type="ChEBI" id="CHEBI:58199"/>
    </ligand>
</feature>
<feature type="binding site" evidence="1">
    <location>
        <position position="498"/>
    </location>
    <ligand>
        <name>L-methionine</name>
        <dbReference type="ChEBI" id="CHEBI:57844"/>
    </ligand>
</feature>
<feature type="binding site" evidence="1">
    <location>
        <begin position="529"/>
        <end position="530"/>
    </location>
    <ligand>
        <name>5-methyltetrahydropteroyltri-L-glutamate</name>
        <dbReference type="ChEBI" id="CHEBI:58207"/>
    </ligand>
</feature>
<feature type="binding site" evidence="1">
    <location>
        <position position="575"/>
    </location>
    <ligand>
        <name>5-methyltetrahydropteroyltri-L-glutamate</name>
        <dbReference type="ChEBI" id="CHEBI:58207"/>
    </ligand>
</feature>
<feature type="binding site" evidence="1">
    <location>
        <position position="613"/>
    </location>
    <ligand>
        <name>L-homocysteine</name>
        <dbReference type="ChEBI" id="CHEBI:58199"/>
    </ligand>
</feature>
<feature type="binding site" evidence="1">
    <location>
        <position position="613"/>
    </location>
    <ligand>
        <name>L-methionine</name>
        <dbReference type="ChEBI" id="CHEBI:57844"/>
    </ligand>
</feature>
<feature type="binding site" evidence="1">
    <location>
        <position position="619"/>
    </location>
    <ligand>
        <name>5-methyltetrahydropteroyltri-L-glutamate</name>
        <dbReference type="ChEBI" id="CHEBI:58207"/>
    </ligand>
</feature>
<feature type="binding site" evidence="1">
    <location>
        <position position="655"/>
    </location>
    <ligand>
        <name>Zn(2+)</name>
        <dbReference type="ChEBI" id="CHEBI:29105"/>
        <note>catalytic</note>
    </ligand>
</feature>
<feature type="binding site" evidence="1">
    <location>
        <position position="657"/>
    </location>
    <ligand>
        <name>Zn(2+)</name>
        <dbReference type="ChEBI" id="CHEBI:29105"/>
        <note>catalytic</note>
    </ligand>
</feature>
<feature type="binding site" evidence="1">
    <location>
        <position position="679"/>
    </location>
    <ligand>
        <name>Zn(2+)</name>
        <dbReference type="ChEBI" id="CHEBI:29105"/>
        <note>catalytic</note>
    </ligand>
</feature>
<feature type="binding site" evidence="1">
    <location>
        <position position="740"/>
    </location>
    <ligand>
        <name>Zn(2+)</name>
        <dbReference type="ChEBI" id="CHEBI:29105"/>
        <note>catalytic</note>
    </ligand>
</feature>
<proteinExistence type="inferred from homology"/>
<name>METE_FLAJ1</name>
<organism>
    <name type="scientific">Flavobacterium johnsoniae (strain ATCC 17061 / DSM 2064 / JCM 8514 / BCRC 14874 / CCUG 350202 / NBRC 14942 / NCIMB 11054 / UW101)</name>
    <name type="common">Cytophaga johnsonae</name>
    <dbReference type="NCBI Taxonomy" id="376686"/>
    <lineage>
        <taxon>Bacteria</taxon>
        <taxon>Pseudomonadati</taxon>
        <taxon>Bacteroidota</taxon>
        <taxon>Flavobacteriia</taxon>
        <taxon>Flavobacteriales</taxon>
        <taxon>Flavobacteriaceae</taxon>
        <taxon>Flavobacterium</taxon>
    </lineage>
</organism>
<protein>
    <recommendedName>
        <fullName evidence="1">5-methyltetrahydropteroyltriglutamate--homocysteine methyltransferase</fullName>
        <ecNumber evidence="1">2.1.1.14</ecNumber>
    </recommendedName>
    <alternativeName>
        <fullName evidence="1">Cobalamin-independent methionine synthase</fullName>
    </alternativeName>
    <alternativeName>
        <fullName evidence="1">Methionine synthase, vitamin-B12 independent isozyme</fullName>
    </alternativeName>
</protein>
<keyword id="KW-0028">Amino-acid biosynthesis</keyword>
<keyword id="KW-0479">Metal-binding</keyword>
<keyword id="KW-0486">Methionine biosynthesis</keyword>
<keyword id="KW-0489">Methyltransferase</keyword>
<keyword id="KW-0677">Repeat</keyword>
<keyword id="KW-0808">Transferase</keyword>
<keyword id="KW-0862">Zinc</keyword>
<sequence length="774" mass="87929">MKTNNLGYPRIGSNRELKKASELYWAGKISADELLDAGKEIRLKNWYLQSEAGVDLIPSNDFSFYDQVLDLTLAVGAIPQRYHELAKSNSSLDLYFAMARGSQKNGQDVVAMEMTKWFDTNYHYIVPEFTKNQKFELFSEKILNEFKEANAVGIKTKPVLIGPVSYLLLGKEKEEGFNRIDLIDALLPVYFEILEKLQIENAEYIQLDEPFLALNLTDKERNVFTKVYNEINVRFPKLKIVLANYFDCFGENLETALALPVDTFHLDLVRCQLQLDDILESGKLASNVNLSLGVVDGRNIWKNDFKKSLELIKKAADALGENRILLAPSCSLIHSPCDLDLETNDQTLTPEIKQWLAFAKQKINEVVLLKQFASGEVNPKNSADYERNVIANENRKTSKLIHNNEVKARTAGITAADDKRKSAFASRRKSQIKALNLPLFPTTTIGSFPQTTEVRSWRAKFKKGELTTEQYNDLIEKETEAAIRFQEETGIDVLVHGEFERNDMVEYFGEQLDGFTFTKNGWVQSYGSRCVKPPVIYGDVSRPNPMTVKWSKYAQSLTSKWVKGMLTGPVTILQWSFVRNDQPRSETCTQIALAVRDEVVDLEKAGIKIIQIDEPAIREGLPLRKEEWAKYLDWAVKAFRISASGVNDDTQIHPHMCYSEFNDIIQNIADMDADVITIECSRSQMELLDAFANFKYPNEIGPGVYDIHSPRVPSSKEMVRLLEKASAVIPVDQLWVNPDCGLKTRHWNETKKALIEMVAAAQEMRKAVENPVTE</sequence>
<accession>A5FJR8</accession>